<reference key="1">
    <citation type="journal article" date="2000" name="Nature">
        <title>The genome sequence of the plant pathogen Xylella fastidiosa.</title>
        <authorList>
            <person name="Simpson A.J.G."/>
            <person name="Reinach F.C."/>
            <person name="Arruda P."/>
            <person name="Abreu F.A."/>
            <person name="Acencio M."/>
            <person name="Alvarenga R."/>
            <person name="Alves L.M.C."/>
            <person name="Araya J.E."/>
            <person name="Baia G.S."/>
            <person name="Baptista C.S."/>
            <person name="Barros M.H."/>
            <person name="Bonaccorsi E.D."/>
            <person name="Bordin S."/>
            <person name="Bove J.M."/>
            <person name="Briones M.R.S."/>
            <person name="Bueno M.R.P."/>
            <person name="Camargo A.A."/>
            <person name="Camargo L.E.A."/>
            <person name="Carraro D.M."/>
            <person name="Carrer H."/>
            <person name="Colauto N.B."/>
            <person name="Colombo C."/>
            <person name="Costa F.F."/>
            <person name="Costa M.C.R."/>
            <person name="Costa-Neto C.M."/>
            <person name="Coutinho L.L."/>
            <person name="Cristofani M."/>
            <person name="Dias-Neto E."/>
            <person name="Docena C."/>
            <person name="El-Dorry H."/>
            <person name="Facincani A.P."/>
            <person name="Ferreira A.J.S."/>
            <person name="Ferreira V.C.A."/>
            <person name="Ferro J.A."/>
            <person name="Fraga J.S."/>
            <person name="Franca S.C."/>
            <person name="Franco M.C."/>
            <person name="Frohme M."/>
            <person name="Furlan L.R."/>
            <person name="Garnier M."/>
            <person name="Goldman G.H."/>
            <person name="Goldman M.H.S."/>
            <person name="Gomes S.L."/>
            <person name="Gruber A."/>
            <person name="Ho P.L."/>
            <person name="Hoheisel J.D."/>
            <person name="Junqueira M.L."/>
            <person name="Kemper E.L."/>
            <person name="Kitajima J.P."/>
            <person name="Krieger J.E."/>
            <person name="Kuramae E.E."/>
            <person name="Laigret F."/>
            <person name="Lambais M.R."/>
            <person name="Leite L.C.C."/>
            <person name="Lemos E.G.M."/>
            <person name="Lemos M.V.F."/>
            <person name="Lopes S.A."/>
            <person name="Lopes C.R."/>
            <person name="Machado J.A."/>
            <person name="Machado M.A."/>
            <person name="Madeira A.M.B.N."/>
            <person name="Madeira H.M.F."/>
            <person name="Marino C.L."/>
            <person name="Marques M.V."/>
            <person name="Martins E.A.L."/>
            <person name="Martins E.M.F."/>
            <person name="Matsukuma A.Y."/>
            <person name="Menck C.F.M."/>
            <person name="Miracca E.C."/>
            <person name="Miyaki C.Y."/>
            <person name="Monteiro-Vitorello C.B."/>
            <person name="Moon D.H."/>
            <person name="Nagai M.A."/>
            <person name="Nascimento A.L.T.O."/>
            <person name="Netto L.E.S."/>
            <person name="Nhani A. Jr."/>
            <person name="Nobrega F.G."/>
            <person name="Nunes L.R."/>
            <person name="Oliveira M.A."/>
            <person name="de Oliveira M.C."/>
            <person name="de Oliveira R.C."/>
            <person name="Palmieri D.A."/>
            <person name="Paris A."/>
            <person name="Peixoto B.R."/>
            <person name="Pereira G.A.G."/>
            <person name="Pereira H.A. Jr."/>
            <person name="Pesquero J.B."/>
            <person name="Quaggio R.B."/>
            <person name="Roberto P.G."/>
            <person name="Rodrigues V."/>
            <person name="de Rosa A.J.M."/>
            <person name="de Rosa V.E. Jr."/>
            <person name="de Sa R.G."/>
            <person name="Santelli R.V."/>
            <person name="Sawasaki H.E."/>
            <person name="da Silva A.C.R."/>
            <person name="da Silva A.M."/>
            <person name="da Silva F.R."/>
            <person name="Silva W.A. Jr."/>
            <person name="da Silveira J.F."/>
            <person name="Silvestri M.L.Z."/>
            <person name="Siqueira W.J."/>
            <person name="de Souza A.A."/>
            <person name="de Souza A.P."/>
            <person name="Terenzi M.F."/>
            <person name="Truffi D."/>
            <person name="Tsai S.M."/>
            <person name="Tsuhako M.H."/>
            <person name="Vallada H."/>
            <person name="Van Sluys M.A."/>
            <person name="Verjovski-Almeida S."/>
            <person name="Vettore A.L."/>
            <person name="Zago M.A."/>
            <person name="Zatz M."/>
            <person name="Meidanis J."/>
            <person name="Setubal J.C."/>
        </authorList>
    </citation>
    <scope>NUCLEOTIDE SEQUENCE [LARGE SCALE GENOMIC DNA]</scope>
    <source>
        <strain>9a5c</strain>
    </source>
</reference>
<proteinExistence type="inferred from homology"/>
<protein>
    <recommendedName>
        <fullName>Phosphate-binding protein PstS</fullName>
        <shortName>PBP</shortName>
    </recommendedName>
</protein>
<accession>Q9PBK3</accession>
<feature type="signal peptide" evidence="3">
    <location>
        <begin position="1"/>
        <end position="18"/>
    </location>
</feature>
<feature type="chain" id="PRO_0000031852" description="Phosphate-binding protein PstS">
    <location>
        <begin position="19"/>
        <end position="364"/>
    </location>
</feature>
<feature type="region of interest" description="Disordered" evidence="4">
    <location>
        <begin position="25"/>
        <end position="47"/>
    </location>
</feature>
<feature type="binding site" evidence="2">
    <location>
        <begin position="58"/>
        <end position="60"/>
    </location>
    <ligand>
        <name>phosphate</name>
        <dbReference type="ChEBI" id="CHEBI:43474"/>
    </ligand>
</feature>
<feature type="binding site" evidence="2">
    <location>
        <position position="87"/>
    </location>
    <ligand>
        <name>phosphate</name>
        <dbReference type="ChEBI" id="CHEBI:43474"/>
    </ligand>
</feature>
<feature type="binding site" evidence="2">
    <location>
        <position position="105"/>
    </location>
    <ligand>
        <name>phosphate</name>
        <dbReference type="ChEBI" id="CHEBI:43474"/>
    </ligand>
</feature>
<feature type="binding site" evidence="2">
    <location>
        <begin position="188"/>
        <end position="190"/>
    </location>
    <ligand>
        <name>phosphate</name>
        <dbReference type="ChEBI" id="CHEBI:43474"/>
    </ligand>
</feature>
<gene>
    <name type="primary">pstS</name>
    <name type="ordered locus">XF_2141</name>
</gene>
<comment type="function">
    <text evidence="1">Part of the ABC transporter complex PstSACB involved in phosphate import.</text>
</comment>
<comment type="subunit">
    <text evidence="5">The complex is composed of two ATP-binding proteins (PstB), two transmembrane proteins (PstC and PstA) and a solute-binding protein (PstS).</text>
</comment>
<comment type="subcellular location">
    <subcellularLocation>
        <location evidence="1">Periplasm</location>
    </subcellularLocation>
</comment>
<comment type="similarity">
    <text evidence="5">Belongs to the PstS family.</text>
</comment>
<organism>
    <name type="scientific">Xylella fastidiosa (strain 9a5c)</name>
    <dbReference type="NCBI Taxonomy" id="160492"/>
    <lineage>
        <taxon>Bacteria</taxon>
        <taxon>Pseudomonadati</taxon>
        <taxon>Pseudomonadota</taxon>
        <taxon>Gammaproteobacteria</taxon>
        <taxon>Lysobacterales</taxon>
        <taxon>Lysobacteraceae</taxon>
        <taxon>Xylella</taxon>
    </lineage>
</organism>
<sequence length="364" mass="38737">MKVYFAGFTLLCLCTAVTITGCKPSNDNQSTGVSQDGNSTTPPSAEQTKSVKISGAGASFIYPLISQWSADYNAATGNKINYQSIGSGGGIAQIKAATIDFGSSDKPLDSSELTQAGLGQFPSAIGGVVPVVNLDNIEPGKLRLTGPLLADIFLGKISKWNDAAIISANPGLHLPDTKINIVHRSDGSGTTFNFSNYLSKVSAEWKQKVGEGTSVQWPGGVGGKGNEGVASYVQQIKGSIGYVELAYALQNKMSYTALQNAAGQWVQPSAESFAAAASNADWSNAKDFNLVITNATGEAAWPITATNFILMRKQTKDAAQRKATLDFFKWSFENGQKQANELHYVPLPPNLVKQIEAYWASEFK</sequence>
<evidence type="ECO:0000250" key="1"/>
<evidence type="ECO:0000250" key="2">
    <source>
        <dbReference type="UniProtKB" id="P9WGT7"/>
    </source>
</evidence>
<evidence type="ECO:0000255" key="3">
    <source>
        <dbReference type="PROSITE-ProRule" id="PRU00303"/>
    </source>
</evidence>
<evidence type="ECO:0000256" key="4">
    <source>
        <dbReference type="SAM" id="MobiDB-lite"/>
    </source>
</evidence>
<evidence type="ECO:0000305" key="5"/>
<keyword id="KW-0574">Periplasm</keyword>
<keyword id="KW-0592">Phosphate transport</keyword>
<keyword id="KW-0732">Signal</keyword>
<keyword id="KW-0813">Transport</keyword>
<name>PSTS_XYLFA</name>
<dbReference type="EMBL" id="AE003849">
    <property type="protein sequence ID" value="AAF84940.1"/>
    <property type="molecule type" value="Genomic_DNA"/>
</dbReference>
<dbReference type="PIR" id="G82595">
    <property type="entry name" value="G82595"/>
</dbReference>
<dbReference type="RefSeq" id="WP_010894590.1">
    <property type="nucleotide sequence ID" value="NC_002488.3"/>
</dbReference>
<dbReference type="SMR" id="Q9PBK3"/>
<dbReference type="STRING" id="160492.XF_2141"/>
<dbReference type="KEGG" id="xfa:XF_2141"/>
<dbReference type="eggNOG" id="COG0226">
    <property type="taxonomic scope" value="Bacteria"/>
</dbReference>
<dbReference type="HOGENOM" id="CLU_034528_1_0_6"/>
<dbReference type="Proteomes" id="UP000000812">
    <property type="component" value="Chromosome"/>
</dbReference>
<dbReference type="GO" id="GO:0043190">
    <property type="term" value="C:ATP-binding cassette (ABC) transporter complex"/>
    <property type="evidence" value="ECO:0007669"/>
    <property type="project" value="InterPro"/>
</dbReference>
<dbReference type="GO" id="GO:0042597">
    <property type="term" value="C:periplasmic space"/>
    <property type="evidence" value="ECO:0007669"/>
    <property type="project" value="UniProtKB-SubCell"/>
</dbReference>
<dbReference type="GO" id="GO:0042301">
    <property type="term" value="F:phosphate ion binding"/>
    <property type="evidence" value="ECO:0007669"/>
    <property type="project" value="InterPro"/>
</dbReference>
<dbReference type="GO" id="GO:0035435">
    <property type="term" value="P:phosphate ion transmembrane transport"/>
    <property type="evidence" value="ECO:0007669"/>
    <property type="project" value="InterPro"/>
</dbReference>
<dbReference type="CDD" id="cd13565">
    <property type="entry name" value="PBP2_PstS"/>
    <property type="match status" value="1"/>
</dbReference>
<dbReference type="Gene3D" id="3.40.190.10">
    <property type="entry name" value="Periplasmic binding protein-like II"/>
    <property type="match status" value="2"/>
</dbReference>
<dbReference type="InterPro" id="IPR005673">
    <property type="entry name" value="ABC_phos-bd_PstS"/>
</dbReference>
<dbReference type="InterPro" id="IPR024370">
    <property type="entry name" value="PBP_domain"/>
</dbReference>
<dbReference type="InterPro" id="IPR050962">
    <property type="entry name" value="Phosphate-bind_PstS"/>
</dbReference>
<dbReference type="NCBIfam" id="TIGR00975">
    <property type="entry name" value="3a0107s03"/>
    <property type="match status" value="1"/>
</dbReference>
<dbReference type="NCBIfam" id="NF008171">
    <property type="entry name" value="PRK10918.1"/>
    <property type="match status" value="1"/>
</dbReference>
<dbReference type="PANTHER" id="PTHR42996">
    <property type="entry name" value="PHOSPHATE-BINDING PROTEIN PSTS"/>
    <property type="match status" value="1"/>
</dbReference>
<dbReference type="PANTHER" id="PTHR42996:SF1">
    <property type="entry name" value="PHOSPHATE-BINDING PROTEIN PSTS"/>
    <property type="match status" value="1"/>
</dbReference>
<dbReference type="Pfam" id="PF12849">
    <property type="entry name" value="PBP_like_2"/>
    <property type="match status" value="1"/>
</dbReference>
<dbReference type="PIRSF" id="PIRSF002756">
    <property type="entry name" value="PstS"/>
    <property type="match status" value="1"/>
</dbReference>
<dbReference type="SUPFAM" id="SSF53850">
    <property type="entry name" value="Periplasmic binding protein-like II"/>
    <property type="match status" value="1"/>
</dbReference>
<dbReference type="PROSITE" id="PS51257">
    <property type="entry name" value="PROKAR_LIPOPROTEIN"/>
    <property type="match status" value="1"/>
</dbReference>